<reference key="1">
    <citation type="submission" date="2008-06" db="EMBL/GenBank/DDBJ databases">
        <title>Lactobacillus casei BL23 complete genome sequence.</title>
        <authorList>
            <person name="Maze A."/>
            <person name="Boel G."/>
            <person name="Bourand A."/>
            <person name="Loux V."/>
            <person name="Gibrat J.F."/>
            <person name="Zuniga M."/>
            <person name="Hartke A."/>
            <person name="Deutscher J."/>
        </authorList>
    </citation>
    <scope>NUCLEOTIDE SEQUENCE [LARGE SCALE GENOMIC DNA]</scope>
    <source>
        <strain>BL23</strain>
    </source>
</reference>
<accession>B3WEQ7</accession>
<keyword id="KW-0067">ATP-binding</keyword>
<keyword id="KW-0143">Chaperone</keyword>
<keyword id="KW-0547">Nucleotide-binding</keyword>
<keyword id="KW-0597">Phosphoprotein</keyword>
<keyword id="KW-0346">Stress response</keyword>
<organism>
    <name type="scientific">Lacticaseibacillus casei (strain BL23)</name>
    <name type="common">Lactobacillus casei</name>
    <dbReference type="NCBI Taxonomy" id="543734"/>
    <lineage>
        <taxon>Bacteria</taxon>
        <taxon>Bacillati</taxon>
        <taxon>Bacillota</taxon>
        <taxon>Bacilli</taxon>
        <taxon>Lactobacillales</taxon>
        <taxon>Lactobacillaceae</taxon>
        <taxon>Lacticaseibacillus</taxon>
    </lineage>
</organism>
<evidence type="ECO:0000255" key="1">
    <source>
        <dbReference type="HAMAP-Rule" id="MF_00332"/>
    </source>
</evidence>
<evidence type="ECO:0000256" key="2">
    <source>
        <dbReference type="SAM" id="MobiDB-lite"/>
    </source>
</evidence>
<dbReference type="EMBL" id="FM177140">
    <property type="protein sequence ID" value="CAQ66858.1"/>
    <property type="molecule type" value="Genomic_DNA"/>
</dbReference>
<dbReference type="SMR" id="B3WEQ7"/>
<dbReference type="KEGG" id="lcb:LCABL_17780"/>
<dbReference type="HOGENOM" id="CLU_005965_2_4_9"/>
<dbReference type="GO" id="GO:0005524">
    <property type="term" value="F:ATP binding"/>
    <property type="evidence" value="ECO:0007669"/>
    <property type="project" value="UniProtKB-UniRule"/>
</dbReference>
<dbReference type="GO" id="GO:0140662">
    <property type="term" value="F:ATP-dependent protein folding chaperone"/>
    <property type="evidence" value="ECO:0007669"/>
    <property type="project" value="InterPro"/>
</dbReference>
<dbReference type="GO" id="GO:0051082">
    <property type="term" value="F:unfolded protein binding"/>
    <property type="evidence" value="ECO:0007669"/>
    <property type="project" value="InterPro"/>
</dbReference>
<dbReference type="CDD" id="cd10234">
    <property type="entry name" value="ASKHA_NBD_HSP70_DnaK-like"/>
    <property type="match status" value="1"/>
</dbReference>
<dbReference type="FunFam" id="2.60.34.10:FF:000014">
    <property type="entry name" value="Chaperone protein DnaK HSP70"/>
    <property type="match status" value="1"/>
</dbReference>
<dbReference type="FunFam" id="3.30.420.40:FF:000020">
    <property type="entry name" value="Chaperone protein HscA homolog"/>
    <property type="match status" value="1"/>
</dbReference>
<dbReference type="FunFam" id="3.30.420.40:FF:000028">
    <property type="entry name" value="heat shock 70 kDa protein-like"/>
    <property type="match status" value="1"/>
</dbReference>
<dbReference type="FunFam" id="3.90.640.10:FF:000003">
    <property type="entry name" value="Molecular chaperone DnaK"/>
    <property type="match status" value="1"/>
</dbReference>
<dbReference type="Gene3D" id="1.20.1270.10">
    <property type="match status" value="1"/>
</dbReference>
<dbReference type="Gene3D" id="3.30.420.40">
    <property type="match status" value="2"/>
</dbReference>
<dbReference type="Gene3D" id="3.90.640.10">
    <property type="entry name" value="Actin, Chain A, domain 4"/>
    <property type="match status" value="1"/>
</dbReference>
<dbReference type="Gene3D" id="2.60.34.10">
    <property type="entry name" value="Substrate Binding Domain Of DNAk, Chain A, domain 1"/>
    <property type="match status" value="1"/>
</dbReference>
<dbReference type="HAMAP" id="MF_00332">
    <property type="entry name" value="DnaK"/>
    <property type="match status" value="1"/>
</dbReference>
<dbReference type="InterPro" id="IPR043129">
    <property type="entry name" value="ATPase_NBD"/>
</dbReference>
<dbReference type="InterPro" id="IPR012725">
    <property type="entry name" value="Chaperone_DnaK"/>
</dbReference>
<dbReference type="InterPro" id="IPR018181">
    <property type="entry name" value="Heat_shock_70_CS"/>
</dbReference>
<dbReference type="InterPro" id="IPR029048">
    <property type="entry name" value="HSP70_C_sf"/>
</dbReference>
<dbReference type="InterPro" id="IPR029047">
    <property type="entry name" value="HSP70_peptide-bd_sf"/>
</dbReference>
<dbReference type="InterPro" id="IPR013126">
    <property type="entry name" value="Hsp_70_fam"/>
</dbReference>
<dbReference type="NCBIfam" id="NF001413">
    <property type="entry name" value="PRK00290.1"/>
    <property type="match status" value="1"/>
</dbReference>
<dbReference type="NCBIfam" id="TIGR02350">
    <property type="entry name" value="prok_dnaK"/>
    <property type="match status" value="1"/>
</dbReference>
<dbReference type="PANTHER" id="PTHR19375">
    <property type="entry name" value="HEAT SHOCK PROTEIN 70KDA"/>
    <property type="match status" value="1"/>
</dbReference>
<dbReference type="Pfam" id="PF00012">
    <property type="entry name" value="HSP70"/>
    <property type="match status" value="1"/>
</dbReference>
<dbReference type="PRINTS" id="PR00301">
    <property type="entry name" value="HEATSHOCK70"/>
</dbReference>
<dbReference type="SUPFAM" id="SSF53067">
    <property type="entry name" value="Actin-like ATPase domain"/>
    <property type="match status" value="2"/>
</dbReference>
<dbReference type="SUPFAM" id="SSF100934">
    <property type="entry name" value="Heat shock protein 70kD (HSP70), C-terminal subdomain"/>
    <property type="match status" value="1"/>
</dbReference>
<dbReference type="SUPFAM" id="SSF100920">
    <property type="entry name" value="Heat shock protein 70kD (HSP70), peptide-binding domain"/>
    <property type="match status" value="1"/>
</dbReference>
<dbReference type="PROSITE" id="PS00297">
    <property type="entry name" value="HSP70_1"/>
    <property type="match status" value="1"/>
</dbReference>
<dbReference type="PROSITE" id="PS00329">
    <property type="entry name" value="HSP70_2"/>
    <property type="match status" value="1"/>
</dbReference>
<name>DNAK_LACCB</name>
<proteinExistence type="inferred from homology"/>
<protein>
    <recommendedName>
        <fullName evidence="1">Chaperone protein DnaK</fullName>
    </recommendedName>
    <alternativeName>
        <fullName evidence="1">HSP70</fullName>
    </alternativeName>
    <alternativeName>
        <fullName evidence="1">Heat shock 70 kDa protein</fullName>
    </alternativeName>
    <alternativeName>
        <fullName evidence="1">Heat shock protein 70</fullName>
    </alternativeName>
</protein>
<comment type="function">
    <text evidence="1">Acts as a chaperone.</text>
</comment>
<comment type="induction">
    <text evidence="1">By stress conditions e.g. heat shock.</text>
</comment>
<comment type="similarity">
    <text evidence="1">Belongs to the heat shock protein 70 family.</text>
</comment>
<sequence length="624" mass="67564">MSKVIGIDLGTTNSAVAVLEGNQPKIITNPEGNRTTPSVVAFKDGEIQVGEVAKRQAITNPDTIVSIKRHMGEANYKVKVGDKEYTPQEISAMILQYIKKFSEDYLGEPVKDAVITVPAYFNDSQRQATKDAGKIAGLNVQRIINEPTASALAYGLDKGDKDEKILVYDLGGGTFDVSILQLGDGVFEVLSTNGDTHLGGDDFDNKIIDWLVAEFKKDNNIDLSKDKMAMQRLKDAAEKAKKDLSGVTQTQISLPFISAGPNGPLHLERTLTRAQFDEMTADLVAKTKIPVENALKDAKLTNADIDKVILNGGSTRTPAVQEAVKQWTGKDPDHSINPDEAVALGAAIQGGVISGDVKDVVLLDVTPLSLGIETMGGVFTKLIDRNTTIPTSKSQVFSTAADSQPAVDIHVLQGERPMAADDKTLGRFELTDIPPAPRGVPQIEVKFDIDKNGIVQVSAKDLGTGKSQNITIKSSSGLSDEEIERMKKEAEENADADEKRKEEVDLKNDVDQLLFQTDKTLKDVDGKVPEEDIKKVKDAQEALKKAQQENNLDDMKQKRDDLSKLVQDMTVKLYENAQKNQQAQGGPASGAATDAGAAQGSDDKKSDDDTINGDYKDVSDDDKK</sequence>
<feature type="chain" id="PRO_1000119717" description="Chaperone protein DnaK">
    <location>
        <begin position="1"/>
        <end position="624"/>
    </location>
</feature>
<feature type="region of interest" description="Disordered" evidence="2">
    <location>
        <begin position="544"/>
        <end position="563"/>
    </location>
</feature>
<feature type="region of interest" description="Disordered" evidence="2">
    <location>
        <begin position="576"/>
        <end position="624"/>
    </location>
</feature>
<feature type="compositionally biased region" description="Low complexity" evidence="2">
    <location>
        <begin position="581"/>
        <end position="600"/>
    </location>
</feature>
<feature type="compositionally biased region" description="Basic and acidic residues" evidence="2">
    <location>
        <begin position="601"/>
        <end position="624"/>
    </location>
</feature>
<feature type="modified residue" description="Phosphothreonine; by autocatalysis" evidence="1">
    <location>
        <position position="174"/>
    </location>
</feature>
<gene>
    <name evidence="1" type="primary">dnaK</name>
    <name type="ordered locus">LCABL_17780</name>
</gene>